<dbReference type="EC" id="2.7.11.1"/>
<dbReference type="EMBL" id="AB125310">
    <property type="protein sequence ID" value="BAD18005.1"/>
    <property type="molecule type" value="mRNA"/>
</dbReference>
<dbReference type="EMBL" id="JF733767">
    <property type="protein sequence ID" value="AEF00938.1"/>
    <property type="molecule type" value="mRNA"/>
</dbReference>
<dbReference type="EMBL" id="DP000011">
    <property type="protein sequence ID" value="ABA99733.1"/>
    <property type="molecule type" value="Genomic_DNA"/>
</dbReference>
<dbReference type="EMBL" id="AP008218">
    <property type="protein sequence ID" value="BAF30174.1"/>
    <property type="molecule type" value="Genomic_DNA"/>
</dbReference>
<dbReference type="EMBL" id="AP014968">
    <property type="protein sequence ID" value="BAT17851.1"/>
    <property type="molecule type" value="Genomic_DNA"/>
</dbReference>
<dbReference type="EMBL" id="AK069697">
    <property type="protein sequence ID" value="BAG91556.1"/>
    <property type="molecule type" value="mRNA"/>
</dbReference>
<dbReference type="RefSeq" id="XP_015619839.1">
    <property type="nucleotide sequence ID" value="XM_015764353.1"/>
</dbReference>
<dbReference type="SMR" id="Q75V57"/>
<dbReference type="BioGRID" id="821697">
    <property type="interactions" value="2"/>
</dbReference>
<dbReference type="FunCoup" id="Q75V57">
    <property type="interactions" value="558"/>
</dbReference>
<dbReference type="STRING" id="39947.Q75V57"/>
<dbReference type="PaxDb" id="39947-Q75V57"/>
<dbReference type="EnsemblPlants" id="Os12t0586100-01">
    <property type="protein sequence ID" value="Os12t0586100-01"/>
    <property type="gene ID" value="Os12g0586100"/>
</dbReference>
<dbReference type="Gramene" id="Os12t0586100-01">
    <property type="protein sequence ID" value="Os12t0586100-01"/>
    <property type="gene ID" value="Os12g0586100"/>
</dbReference>
<dbReference type="KEGG" id="dosa:Os12g0586100"/>
<dbReference type="eggNOG" id="KOG0583">
    <property type="taxonomic scope" value="Eukaryota"/>
</dbReference>
<dbReference type="HOGENOM" id="CLU_000288_63_0_1"/>
<dbReference type="InParanoid" id="Q75V57"/>
<dbReference type="OMA" id="MQPKAWG"/>
<dbReference type="OrthoDB" id="193931at2759"/>
<dbReference type="PlantReactome" id="R-OSA-3899351">
    <property type="pathway name" value="Abscisic acid (ABA) mediated signaling"/>
</dbReference>
<dbReference type="Proteomes" id="UP000000763">
    <property type="component" value="Chromosome 12"/>
</dbReference>
<dbReference type="Proteomes" id="UP000059680">
    <property type="component" value="Chromosome 12"/>
</dbReference>
<dbReference type="GO" id="GO:0005737">
    <property type="term" value="C:cytoplasm"/>
    <property type="evidence" value="ECO:0007669"/>
    <property type="project" value="UniProtKB-SubCell"/>
</dbReference>
<dbReference type="GO" id="GO:0005634">
    <property type="term" value="C:nucleus"/>
    <property type="evidence" value="ECO:0000318"/>
    <property type="project" value="GO_Central"/>
</dbReference>
<dbReference type="GO" id="GO:0005524">
    <property type="term" value="F:ATP binding"/>
    <property type="evidence" value="ECO:0007669"/>
    <property type="project" value="UniProtKB-KW"/>
</dbReference>
<dbReference type="GO" id="GO:0106310">
    <property type="term" value="F:protein serine kinase activity"/>
    <property type="evidence" value="ECO:0007669"/>
    <property type="project" value="RHEA"/>
</dbReference>
<dbReference type="GO" id="GO:0004674">
    <property type="term" value="F:protein serine/threonine kinase activity"/>
    <property type="evidence" value="ECO:0000318"/>
    <property type="project" value="GO_Central"/>
</dbReference>
<dbReference type="GO" id="GO:0009738">
    <property type="term" value="P:abscisic acid-activated signaling pathway"/>
    <property type="evidence" value="ECO:0007669"/>
    <property type="project" value="UniProtKB-KW"/>
</dbReference>
<dbReference type="CDD" id="cd14662">
    <property type="entry name" value="STKc_SnRK2"/>
    <property type="match status" value="1"/>
</dbReference>
<dbReference type="FunFam" id="1.10.510.10:FF:000085">
    <property type="entry name" value="Serine/threonine-protein kinase SRK2E"/>
    <property type="match status" value="1"/>
</dbReference>
<dbReference type="FunFam" id="3.30.200.20:FF:000045">
    <property type="entry name" value="Serine/threonine-protein kinase SRK2E"/>
    <property type="match status" value="1"/>
</dbReference>
<dbReference type="Gene3D" id="3.30.200.20">
    <property type="entry name" value="Phosphorylase Kinase, domain 1"/>
    <property type="match status" value="1"/>
</dbReference>
<dbReference type="Gene3D" id="1.10.510.10">
    <property type="entry name" value="Transferase(Phosphotransferase) domain 1"/>
    <property type="match status" value="1"/>
</dbReference>
<dbReference type="InterPro" id="IPR011009">
    <property type="entry name" value="Kinase-like_dom_sf"/>
</dbReference>
<dbReference type="InterPro" id="IPR000719">
    <property type="entry name" value="Prot_kinase_dom"/>
</dbReference>
<dbReference type="InterPro" id="IPR017441">
    <property type="entry name" value="Protein_kinase_ATP_BS"/>
</dbReference>
<dbReference type="InterPro" id="IPR008271">
    <property type="entry name" value="Ser/Thr_kinase_AS"/>
</dbReference>
<dbReference type="PANTHER" id="PTHR24343">
    <property type="entry name" value="SERINE/THREONINE KINASE"/>
    <property type="match status" value="1"/>
</dbReference>
<dbReference type="PANTHER" id="PTHR24343:SF326">
    <property type="entry name" value="SERINE_THREONINE-PROTEIN KINASE SAPK9"/>
    <property type="match status" value="1"/>
</dbReference>
<dbReference type="Pfam" id="PF00069">
    <property type="entry name" value="Pkinase"/>
    <property type="match status" value="1"/>
</dbReference>
<dbReference type="SMART" id="SM00220">
    <property type="entry name" value="S_TKc"/>
    <property type="match status" value="1"/>
</dbReference>
<dbReference type="SUPFAM" id="SSF56112">
    <property type="entry name" value="Protein kinase-like (PK-like)"/>
    <property type="match status" value="1"/>
</dbReference>
<dbReference type="PROSITE" id="PS00107">
    <property type="entry name" value="PROTEIN_KINASE_ATP"/>
    <property type="match status" value="1"/>
</dbReference>
<dbReference type="PROSITE" id="PS50011">
    <property type="entry name" value="PROTEIN_KINASE_DOM"/>
    <property type="match status" value="1"/>
</dbReference>
<dbReference type="PROSITE" id="PS00108">
    <property type="entry name" value="PROTEIN_KINASE_ST"/>
    <property type="match status" value="1"/>
</dbReference>
<name>SAPK9_ORYSJ</name>
<keyword id="KW-0938">Abscisic acid signaling pathway</keyword>
<keyword id="KW-0067">ATP-binding</keyword>
<keyword id="KW-0963">Cytoplasm</keyword>
<keyword id="KW-0418">Kinase</keyword>
<keyword id="KW-0547">Nucleotide-binding</keyword>
<keyword id="KW-0539">Nucleus</keyword>
<keyword id="KW-0597">Phosphoprotein</keyword>
<keyword id="KW-1185">Reference proteome</keyword>
<keyword id="KW-0723">Serine/threonine-protein kinase</keyword>
<keyword id="KW-0808">Transferase</keyword>
<accession>Q75V57</accession>
<accession>F6M7D3</accession>
<accession>Q2QMY2</accession>
<organism>
    <name type="scientific">Oryza sativa subsp. japonica</name>
    <name type="common">Rice</name>
    <dbReference type="NCBI Taxonomy" id="39947"/>
    <lineage>
        <taxon>Eukaryota</taxon>
        <taxon>Viridiplantae</taxon>
        <taxon>Streptophyta</taxon>
        <taxon>Embryophyta</taxon>
        <taxon>Tracheophyta</taxon>
        <taxon>Spermatophyta</taxon>
        <taxon>Magnoliopsida</taxon>
        <taxon>Liliopsida</taxon>
        <taxon>Poales</taxon>
        <taxon>Poaceae</taxon>
        <taxon>BOP clade</taxon>
        <taxon>Oryzoideae</taxon>
        <taxon>Oryzeae</taxon>
        <taxon>Oryzinae</taxon>
        <taxon>Oryza</taxon>
        <taxon>Oryza sativa</taxon>
    </lineage>
</organism>
<proteinExistence type="evidence at protein level"/>
<feature type="chain" id="PRO_0000086636" description="Serine/threonine-protein kinase SAPK9">
    <location>
        <begin position="1"/>
        <end position="361"/>
    </location>
</feature>
<feature type="domain" description="Protein kinase" evidence="2">
    <location>
        <begin position="22"/>
        <end position="278"/>
    </location>
</feature>
<feature type="active site" description="Proton acceptor" evidence="2 3">
    <location>
        <position position="141"/>
    </location>
</feature>
<feature type="binding site" evidence="2">
    <location>
        <begin position="28"/>
        <end position="36"/>
    </location>
    <ligand>
        <name>ATP</name>
        <dbReference type="ChEBI" id="CHEBI:30616"/>
    </ligand>
</feature>
<feature type="binding site" evidence="2">
    <location>
        <position position="51"/>
    </location>
    <ligand>
        <name>ATP</name>
        <dbReference type="ChEBI" id="CHEBI:30616"/>
    </ligand>
</feature>
<sequence length="361" mass="40628">MERAAAGPLGMEMPIMHDGDRYELVKEIGSGNFGVARLMRNRASGDLVAVKYIDRGEKIDENVQREIINHRSLRHPNIIRFKEVILTPTHLAIVMEYASGGELFERICSAGRFSEDEARFFFQQLISGVSYCHSMQVCHRDLKLENTLLDGSTAPRLKICDFGYSKSSVLHSQPKSTVGTPAYIAPEVLLKKEYDGKIADVWSCGVTLYVMLVGAYPFEDPEDPKNFRKTIQKILGVQYSIPDYVHISPECRDLITRIFVGNPASRITMPEIKNHPWFMKNIPADLMDDGMVSNQYEEPDQPMQNMNEIMQILAEATIPAAGTSGINQFLTDSLDLDDDMEDMDSDLDLDIESSGEIVYAM</sequence>
<protein>
    <recommendedName>
        <fullName>Serine/threonine-protein kinase SAPK9</fullName>
        <ecNumber>2.7.11.1</ecNumber>
    </recommendedName>
    <alternativeName>
        <fullName>Osmotic stress/abscisic acid-activated protein kinase 9</fullName>
    </alternativeName>
    <alternativeName>
        <fullName evidence="7">stress-activated protein kinase 9</fullName>
        <shortName evidence="7">OsSAPK9</shortName>
    </alternativeName>
</protein>
<evidence type="ECO:0000250" key="1"/>
<evidence type="ECO:0000255" key="2">
    <source>
        <dbReference type="PROSITE-ProRule" id="PRU00159"/>
    </source>
</evidence>
<evidence type="ECO:0000255" key="3">
    <source>
        <dbReference type="PROSITE-ProRule" id="PRU10027"/>
    </source>
</evidence>
<evidence type="ECO:0000269" key="4">
    <source>
    </source>
</evidence>
<evidence type="ECO:0000269" key="5">
    <source>
    </source>
</evidence>
<evidence type="ECO:0000269" key="6">
    <source ref="2"/>
</evidence>
<evidence type="ECO:0000303" key="7">
    <source ref="2"/>
</evidence>
<evidence type="ECO:0000305" key="8"/>
<gene>
    <name type="primary">SAPK9</name>
    <name type="ordered locus">Os12g0586100</name>
    <name type="ordered locus">LOC_Os12g39630</name>
    <name type="ORF">OOSJNBa0017N12.8</name>
</gene>
<comment type="function">
    <text evidence="5 8">May play a role in signal transduction of hyperosmotic response (Probable). Can phosphorylate BZIP46 in vitro (PubMed:22301130).</text>
</comment>
<comment type="catalytic activity">
    <reaction>
        <text>L-seryl-[protein] + ATP = O-phospho-L-seryl-[protein] + ADP + H(+)</text>
        <dbReference type="Rhea" id="RHEA:17989"/>
        <dbReference type="Rhea" id="RHEA-COMP:9863"/>
        <dbReference type="Rhea" id="RHEA-COMP:11604"/>
        <dbReference type="ChEBI" id="CHEBI:15378"/>
        <dbReference type="ChEBI" id="CHEBI:29999"/>
        <dbReference type="ChEBI" id="CHEBI:30616"/>
        <dbReference type="ChEBI" id="CHEBI:83421"/>
        <dbReference type="ChEBI" id="CHEBI:456216"/>
        <dbReference type="EC" id="2.7.11.1"/>
    </reaction>
</comment>
<comment type="catalytic activity">
    <reaction>
        <text>L-threonyl-[protein] + ATP = O-phospho-L-threonyl-[protein] + ADP + H(+)</text>
        <dbReference type="Rhea" id="RHEA:46608"/>
        <dbReference type="Rhea" id="RHEA-COMP:11060"/>
        <dbReference type="Rhea" id="RHEA-COMP:11605"/>
        <dbReference type="ChEBI" id="CHEBI:15378"/>
        <dbReference type="ChEBI" id="CHEBI:30013"/>
        <dbReference type="ChEBI" id="CHEBI:30616"/>
        <dbReference type="ChEBI" id="CHEBI:61977"/>
        <dbReference type="ChEBI" id="CHEBI:456216"/>
        <dbReference type="EC" id="2.7.11.1"/>
    </reaction>
</comment>
<comment type="activity regulation">
    <text>Activated by hyperosmotic stress and abscisic acid (ABA).</text>
</comment>
<comment type="subunit">
    <text evidence="5">Interacts with BZIP46.</text>
</comment>
<comment type="subcellular location">
    <subcellularLocation>
        <location evidence="6">Cytoplasm</location>
    </subcellularLocation>
    <subcellularLocation>
        <location evidence="6">Nucleus</location>
    </subcellularLocation>
</comment>
<comment type="tissue specificity">
    <text evidence="4">Expressed in leaf sheaths and roots. Expressed in shoots of young seedlings.</text>
</comment>
<comment type="induction">
    <text evidence="4 6">Down-regulated by ABA in roots (PubMed:15084714). Induced during incompatible interaction with the bacterial pathogen Xanthomonas oryzae pv. oryzicola (Ref.2).</text>
</comment>
<comment type="PTM">
    <text evidence="1">May be phosphorylated.</text>
</comment>
<comment type="similarity">
    <text evidence="2">Belongs to the protein kinase superfamily. Ser/Thr protein kinase family.</text>
</comment>
<reference key="1">
    <citation type="journal article" date="2004" name="Plant Cell">
        <title>Differential activation of the rice sucrose nonfermenting1-related protein kinase2 family by hyperosmotic stress and abscisic acid.</title>
        <authorList>
            <person name="Kobayashi Y."/>
            <person name="Yamamoto S."/>
            <person name="Minami H."/>
            <person name="Kagaya Y."/>
            <person name="Hattori T."/>
        </authorList>
    </citation>
    <scope>NUCLEOTIDE SEQUENCE [MRNA]</scope>
    <scope>TISSUE SPECIFICITY</scope>
    <scope>INDUCTION</scope>
    <scope>NOMENCLATURE</scope>
    <source>
        <strain>cv. Nipponbare</strain>
    </source>
</reference>
<reference key="2">
    <citation type="journal article" date="2013" name="Plant Mol. Biol. Rep.">
        <title>Genome-wide phylogenetic analysis of stress-activated protein kinase genes in rice (OsSAPKs) and expression profiling in response to Xanthomonas oryzae pv. oryzicola infection.</title>
        <authorList>
            <person name="Xu M.-R."/>
            <person name="Huang L.-Y."/>
            <person name="Zhang F."/>
            <person name="Zhu L.-H."/>
            <person name="Zhou Y.-L."/>
            <person name="Li Z.-K."/>
        </authorList>
    </citation>
    <scope>NUCLEOTIDE SEQUENCE [MRNA]</scope>
    <scope>INDUCTION BY XANTHOMONAS ORYZAE</scope>
    <scope>SUBCELLULAR LOCATION</scope>
</reference>
<reference key="3">
    <citation type="journal article" date="2005" name="BMC Biol.">
        <title>The sequence of rice chromosomes 11 and 12, rich in disease resistance genes and recent gene duplications.</title>
        <authorList>
            <consortium name="The rice chromosomes 11 and 12 sequencing consortia"/>
        </authorList>
    </citation>
    <scope>NUCLEOTIDE SEQUENCE [LARGE SCALE GENOMIC DNA]</scope>
    <source>
        <strain>cv. Nipponbare</strain>
    </source>
</reference>
<reference key="4">
    <citation type="journal article" date="2005" name="Nature">
        <title>The map-based sequence of the rice genome.</title>
        <authorList>
            <consortium name="International rice genome sequencing project (IRGSP)"/>
        </authorList>
    </citation>
    <scope>NUCLEOTIDE SEQUENCE [LARGE SCALE GENOMIC DNA]</scope>
    <source>
        <strain>cv. Nipponbare</strain>
    </source>
</reference>
<reference key="5">
    <citation type="journal article" date="2008" name="Nucleic Acids Res.">
        <title>The rice annotation project database (RAP-DB): 2008 update.</title>
        <authorList>
            <consortium name="The rice annotation project (RAP)"/>
        </authorList>
    </citation>
    <scope>GENOME REANNOTATION</scope>
    <source>
        <strain>cv. Nipponbare</strain>
    </source>
</reference>
<reference key="6">
    <citation type="journal article" date="2013" name="Rice">
        <title>Improvement of the Oryza sativa Nipponbare reference genome using next generation sequence and optical map data.</title>
        <authorList>
            <person name="Kawahara Y."/>
            <person name="de la Bastide M."/>
            <person name="Hamilton J.P."/>
            <person name="Kanamori H."/>
            <person name="McCombie W.R."/>
            <person name="Ouyang S."/>
            <person name="Schwartz D.C."/>
            <person name="Tanaka T."/>
            <person name="Wu J."/>
            <person name="Zhou S."/>
            <person name="Childs K.L."/>
            <person name="Davidson R.M."/>
            <person name="Lin H."/>
            <person name="Quesada-Ocampo L."/>
            <person name="Vaillancourt B."/>
            <person name="Sakai H."/>
            <person name="Lee S.S."/>
            <person name="Kim J."/>
            <person name="Numa H."/>
            <person name="Itoh T."/>
            <person name="Buell C.R."/>
            <person name="Matsumoto T."/>
        </authorList>
    </citation>
    <scope>GENOME REANNOTATION</scope>
    <source>
        <strain>cv. Nipponbare</strain>
    </source>
</reference>
<reference key="7">
    <citation type="journal article" date="2003" name="Science">
        <title>Collection, mapping, and annotation of over 28,000 cDNA clones from japonica rice.</title>
        <authorList>
            <consortium name="The rice full-length cDNA consortium"/>
        </authorList>
    </citation>
    <scope>NUCLEOTIDE SEQUENCE [LARGE SCALE MRNA]</scope>
    <source>
        <strain>cv. Nipponbare</strain>
    </source>
</reference>
<reference key="8">
    <citation type="journal article" date="2012" name="Plant Physiol.">
        <title>Constitutive activation of transcription factor OsbZIP46 improves drought tolerance in rice.</title>
        <authorList>
            <person name="Tang N."/>
            <person name="Zhang H."/>
            <person name="Li X."/>
            <person name="Xiao J."/>
            <person name="Xiong L."/>
        </authorList>
    </citation>
    <scope>FUNCTION</scope>
    <scope>INTERACTION WITH BZIP46</scope>
</reference>